<organism>
    <name type="scientific">Pediococcus pentosaceus (strain ATCC 25745 / CCUG 21536 / LMG 10740 / 183-1w)</name>
    <dbReference type="NCBI Taxonomy" id="278197"/>
    <lineage>
        <taxon>Bacteria</taxon>
        <taxon>Bacillati</taxon>
        <taxon>Bacillota</taxon>
        <taxon>Bacilli</taxon>
        <taxon>Lactobacillales</taxon>
        <taxon>Lactobacillaceae</taxon>
        <taxon>Pediococcus</taxon>
    </lineage>
</organism>
<accession>Q03ES1</accession>
<protein>
    <recommendedName>
        <fullName evidence="1">UPF0473 protein PEPE_1260</fullName>
    </recommendedName>
</protein>
<dbReference type="EMBL" id="CP000422">
    <property type="protein sequence ID" value="ABJ68301.1"/>
    <property type="molecule type" value="Genomic_DNA"/>
</dbReference>
<dbReference type="RefSeq" id="WP_002834381.1">
    <property type="nucleotide sequence ID" value="NC_008525.1"/>
</dbReference>
<dbReference type="STRING" id="278197.PEPE_1260"/>
<dbReference type="GeneID" id="33061783"/>
<dbReference type="KEGG" id="ppe:PEPE_1260"/>
<dbReference type="eggNOG" id="COG3906">
    <property type="taxonomic scope" value="Bacteria"/>
</dbReference>
<dbReference type="HOGENOM" id="CLU_146610_2_1_9"/>
<dbReference type="OrthoDB" id="2086132at2"/>
<dbReference type="Proteomes" id="UP000000773">
    <property type="component" value="Chromosome"/>
</dbReference>
<dbReference type="HAMAP" id="MF_01448">
    <property type="entry name" value="UPF0473"/>
    <property type="match status" value="1"/>
</dbReference>
<dbReference type="InterPro" id="IPR009711">
    <property type="entry name" value="UPF0473"/>
</dbReference>
<dbReference type="NCBIfam" id="NF010215">
    <property type="entry name" value="PRK13678.1-2"/>
    <property type="match status" value="1"/>
</dbReference>
<dbReference type="NCBIfam" id="NF010217">
    <property type="entry name" value="PRK13678.1-4"/>
    <property type="match status" value="1"/>
</dbReference>
<dbReference type="PANTHER" id="PTHR40066">
    <property type="entry name" value="UPF0473 PROTEIN CBO2561/CLC_2432"/>
    <property type="match status" value="1"/>
</dbReference>
<dbReference type="PANTHER" id="PTHR40066:SF1">
    <property type="entry name" value="UPF0473 PROTEIN CBO2561_CLC_2432"/>
    <property type="match status" value="1"/>
</dbReference>
<dbReference type="Pfam" id="PF06949">
    <property type="entry name" value="DUF1292"/>
    <property type="match status" value="1"/>
</dbReference>
<evidence type="ECO:0000255" key="1">
    <source>
        <dbReference type="HAMAP-Rule" id="MF_01448"/>
    </source>
</evidence>
<name>Y1260_PEDPA</name>
<feature type="chain" id="PRO_0000304852" description="UPF0473 protein PEPE_1260">
    <location>
        <begin position="1"/>
        <end position="95"/>
    </location>
</feature>
<comment type="similarity">
    <text evidence="1">Belongs to the UPF0473 family.</text>
</comment>
<reference key="1">
    <citation type="journal article" date="2006" name="Proc. Natl. Acad. Sci. U.S.A.">
        <title>Comparative genomics of the lactic acid bacteria.</title>
        <authorList>
            <person name="Makarova K.S."/>
            <person name="Slesarev A."/>
            <person name="Wolf Y.I."/>
            <person name="Sorokin A."/>
            <person name="Mirkin B."/>
            <person name="Koonin E.V."/>
            <person name="Pavlov A."/>
            <person name="Pavlova N."/>
            <person name="Karamychev V."/>
            <person name="Polouchine N."/>
            <person name="Shakhova V."/>
            <person name="Grigoriev I."/>
            <person name="Lou Y."/>
            <person name="Rohksar D."/>
            <person name="Lucas S."/>
            <person name="Huang K."/>
            <person name="Goodstein D.M."/>
            <person name="Hawkins T."/>
            <person name="Plengvidhya V."/>
            <person name="Welker D."/>
            <person name="Hughes J."/>
            <person name="Goh Y."/>
            <person name="Benson A."/>
            <person name="Baldwin K."/>
            <person name="Lee J.-H."/>
            <person name="Diaz-Muniz I."/>
            <person name="Dosti B."/>
            <person name="Smeianov V."/>
            <person name="Wechter W."/>
            <person name="Barabote R."/>
            <person name="Lorca G."/>
            <person name="Altermann E."/>
            <person name="Barrangou R."/>
            <person name="Ganesan B."/>
            <person name="Xie Y."/>
            <person name="Rawsthorne H."/>
            <person name="Tamir D."/>
            <person name="Parker C."/>
            <person name="Breidt F."/>
            <person name="Broadbent J.R."/>
            <person name="Hutkins R."/>
            <person name="O'Sullivan D."/>
            <person name="Steele J."/>
            <person name="Unlu G."/>
            <person name="Saier M.H. Jr."/>
            <person name="Klaenhammer T."/>
            <person name="Richardson P."/>
            <person name="Kozyavkin S."/>
            <person name="Weimer B.C."/>
            <person name="Mills D.A."/>
        </authorList>
    </citation>
    <scope>NUCLEOTIDE SEQUENCE [LARGE SCALE GENOMIC DNA]</scope>
    <source>
        <strain>ATCC 25745 / CCUG 21536 / LMG 10740 / 183-1w</strain>
    </source>
</reference>
<gene>
    <name type="ordered locus">PEPE_1260</name>
</gene>
<proteinExistence type="inferred from homology"/>
<sequence>MDNEEQKITLVDEHGNEELYNVLFTFDSEDYGRSYVLLYPSEAEADEEVDIQAYAFMPDENHDLGEGELIPIESDEEWDMVEEVLNTFLGDQDQD</sequence>